<comment type="function">
    <text evidence="1">Endonuclease IV plays a role in DNA repair. It cleaves phosphodiester bonds at apurinic or apyrimidinic (AP) sites, generating a 3'-hydroxyl group and a 5'-terminal sugar phosphate.</text>
</comment>
<comment type="catalytic activity">
    <reaction evidence="1">
        <text>Endonucleolytic cleavage to 5'-phosphooligonucleotide end-products.</text>
        <dbReference type="EC" id="3.1.21.2"/>
    </reaction>
</comment>
<comment type="cofactor">
    <cofactor evidence="1">
        <name>Zn(2+)</name>
        <dbReference type="ChEBI" id="CHEBI:29105"/>
    </cofactor>
    <text evidence="1">Binds 3 Zn(2+) ions.</text>
</comment>
<comment type="similarity">
    <text evidence="1">Belongs to the AP endonuclease 2 family.</text>
</comment>
<reference key="1">
    <citation type="submission" date="2008-05" db="EMBL/GenBank/DDBJ databases">
        <title>Complete genome sequence of Clostridium botulinum E3 str. Alaska E43.</title>
        <authorList>
            <person name="Brinkac L.M."/>
            <person name="Brown J.L."/>
            <person name="Bruce D."/>
            <person name="Detter C."/>
            <person name="Munk C."/>
            <person name="Smith L.A."/>
            <person name="Smith T.J."/>
            <person name="Sutton G."/>
            <person name="Brettin T.S."/>
        </authorList>
    </citation>
    <scope>NUCLEOTIDE SEQUENCE [LARGE SCALE GENOMIC DNA]</scope>
    <source>
        <strain>Alaska E43 / Type E3</strain>
    </source>
</reference>
<keyword id="KW-0227">DNA damage</keyword>
<keyword id="KW-0234">DNA repair</keyword>
<keyword id="KW-0255">Endonuclease</keyword>
<keyword id="KW-0378">Hydrolase</keyword>
<keyword id="KW-0479">Metal-binding</keyword>
<keyword id="KW-0540">Nuclease</keyword>
<keyword id="KW-0862">Zinc</keyword>
<sequence length="277" mass="31451">MLNIGCHLSSSKGFKNMGENALKIGANTFQFFTRNPRGSKAKDIDENDVKEFLELAKENKFCKILAHAPYTLNACSADERNREFAIEIMADDLKRMEYIPNNLYNFHPGSHVKQGTEVGIEYISSALNSILKKDQTTKVLLETMSGKGTEVGRNFEEIAEIIKRVELKEHVGVCLDTCHIHDAGYDIVNELDEVLEEFDSMIGLDKLYAIHLNDSKNPFESHKDRHETIGNGYIGLDALTNIINHPKLCHLPFFLETPNELEGYKREIELLKSAYKK</sequence>
<gene>
    <name evidence="1" type="primary">nfo</name>
    <name type="ordered locus">CLH_0676</name>
</gene>
<name>END4_CLOBA</name>
<feature type="chain" id="PRO_1000096876" description="Probable endonuclease 4">
    <location>
        <begin position="1"/>
        <end position="277"/>
    </location>
</feature>
<feature type="binding site" evidence="1">
    <location>
        <position position="67"/>
    </location>
    <ligand>
        <name>Zn(2+)</name>
        <dbReference type="ChEBI" id="CHEBI:29105"/>
        <label>1</label>
    </ligand>
</feature>
<feature type="binding site" evidence="1">
    <location>
        <position position="107"/>
    </location>
    <ligand>
        <name>Zn(2+)</name>
        <dbReference type="ChEBI" id="CHEBI:29105"/>
        <label>1</label>
    </ligand>
</feature>
<feature type="binding site" evidence="1">
    <location>
        <position position="142"/>
    </location>
    <ligand>
        <name>Zn(2+)</name>
        <dbReference type="ChEBI" id="CHEBI:29105"/>
        <label>1</label>
    </ligand>
</feature>
<feature type="binding site" evidence="1">
    <location>
        <position position="142"/>
    </location>
    <ligand>
        <name>Zn(2+)</name>
        <dbReference type="ChEBI" id="CHEBI:29105"/>
        <label>2</label>
    </ligand>
</feature>
<feature type="binding site" evidence="1">
    <location>
        <position position="176"/>
    </location>
    <ligand>
        <name>Zn(2+)</name>
        <dbReference type="ChEBI" id="CHEBI:29105"/>
        <label>2</label>
    </ligand>
</feature>
<feature type="binding site" evidence="1">
    <location>
        <position position="179"/>
    </location>
    <ligand>
        <name>Zn(2+)</name>
        <dbReference type="ChEBI" id="CHEBI:29105"/>
        <label>3</label>
    </ligand>
</feature>
<feature type="binding site" evidence="1">
    <location>
        <position position="211"/>
    </location>
    <ligand>
        <name>Zn(2+)</name>
        <dbReference type="ChEBI" id="CHEBI:29105"/>
        <label>2</label>
    </ligand>
</feature>
<feature type="binding site" evidence="1">
    <location>
        <position position="224"/>
    </location>
    <ligand>
        <name>Zn(2+)</name>
        <dbReference type="ChEBI" id="CHEBI:29105"/>
        <label>3</label>
    </ligand>
</feature>
<feature type="binding site" evidence="1">
    <location>
        <position position="226"/>
    </location>
    <ligand>
        <name>Zn(2+)</name>
        <dbReference type="ChEBI" id="CHEBI:29105"/>
        <label>3</label>
    </ligand>
</feature>
<feature type="binding site" evidence="1">
    <location>
        <position position="256"/>
    </location>
    <ligand>
        <name>Zn(2+)</name>
        <dbReference type="ChEBI" id="CHEBI:29105"/>
        <label>2</label>
    </ligand>
</feature>
<organism>
    <name type="scientific">Clostridium botulinum (strain Alaska E43 / Type E3)</name>
    <dbReference type="NCBI Taxonomy" id="508767"/>
    <lineage>
        <taxon>Bacteria</taxon>
        <taxon>Bacillati</taxon>
        <taxon>Bacillota</taxon>
        <taxon>Clostridia</taxon>
        <taxon>Eubacteriales</taxon>
        <taxon>Clostridiaceae</taxon>
        <taxon>Clostridium</taxon>
    </lineage>
</organism>
<protein>
    <recommendedName>
        <fullName evidence="1">Probable endonuclease 4</fullName>
        <ecNumber evidence="1">3.1.21.2</ecNumber>
    </recommendedName>
    <alternativeName>
        <fullName evidence="1">Endodeoxyribonuclease IV</fullName>
    </alternativeName>
    <alternativeName>
        <fullName evidence="1">Endonuclease IV</fullName>
    </alternativeName>
</protein>
<proteinExistence type="inferred from homology"/>
<dbReference type="EC" id="3.1.21.2" evidence="1"/>
<dbReference type="EMBL" id="CP001078">
    <property type="protein sequence ID" value="ACD51425.1"/>
    <property type="molecule type" value="Genomic_DNA"/>
</dbReference>
<dbReference type="RefSeq" id="WP_012449789.1">
    <property type="nucleotide sequence ID" value="NC_010723.1"/>
</dbReference>
<dbReference type="SMR" id="B2V158"/>
<dbReference type="KEGG" id="cbt:CLH_0676"/>
<dbReference type="HOGENOM" id="CLU_025885_4_1_9"/>
<dbReference type="GO" id="GO:0008833">
    <property type="term" value="F:deoxyribonuclease IV (phage-T4-induced) activity"/>
    <property type="evidence" value="ECO:0007669"/>
    <property type="project" value="UniProtKB-UniRule"/>
</dbReference>
<dbReference type="GO" id="GO:0003677">
    <property type="term" value="F:DNA binding"/>
    <property type="evidence" value="ECO:0007669"/>
    <property type="project" value="InterPro"/>
</dbReference>
<dbReference type="GO" id="GO:0003906">
    <property type="term" value="F:DNA-(apurinic or apyrimidinic site) endonuclease activity"/>
    <property type="evidence" value="ECO:0007669"/>
    <property type="project" value="TreeGrafter"/>
</dbReference>
<dbReference type="GO" id="GO:0008081">
    <property type="term" value="F:phosphoric diester hydrolase activity"/>
    <property type="evidence" value="ECO:0007669"/>
    <property type="project" value="TreeGrafter"/>
</dbReference>
<dbReference type="GO" id="GO:0008270">
    <property type="term" value="F:zinc ion binding"/>
    <property type="evidence" value="ECO:0007669"/>
    <property type="project" value="UniProtKB-UniRule"/>
</dbReference>
<dbReference type="GO" id="GO:0006284">
    <property type="term" value="P:base-excision repair"/>
    <property type="evidence" value="ECO:0007669"/>
    <property type="project" value="TreeGrafter"/>
</dbReference>
<dbReference type="CDD" id="cd00019">
    <property type="entry name" value="AP2Ec"/>
    <property type="match status" value="1"/>
</dbReference>
<dbReference type="FunFam" id="3.20.20.150:FF:000001">
    <property type="entry name" value="Probable endonuclease 4"/>
    <property type="match status" value="1"/>
</dbReference>
<dbReference type="Gene3D" id="3.20.20.150">
    <property type="entry name" value="Divalent-metal-dependent TIM barrel enzymes"/>
    <property type="match status" value="1"/>
</dbReference>
<dbReference type="HAMAP" id="MF_00152">
    <property type="entry name" value="Nfo"/>
    <property type="match status" value="1"/>
</dbReference>
<dbReference type="InterPro" id="IPR001719">
    <property type="entry name" value="AP_endonuc_2"/>
</dbReference>
<dbReference type="InterPro" id="IPR018246">
    <property type="entry name" value="AP_endonuc_F2_Zn_BS"/>
</dbReference>
<dbReference type="InterPro" id="IPR036237">
    <property type="entry name" value="Xyl_isomerase-like_sf"/>
</dbReference>
<dbReference type="InterPro" id="IPR013022">
    <property type="entry name" value="Xyl_isomerase-like_TIM-brl"/>
</dbReference>
<dbReference type="NCBIfam" id="TIGR00587">
    <property type="entry name" value="nfo"/>
    <property type="match status" value="1"/>
</dbReference>
<dbReference type="PANTHER" id="PTHR21445:SF0">
    <property type="entry name" value="APURINIC-APYRIMIDINIC ENDONUCLEASE"/>
    <property type="match status" value="1"/>
</dbReference>
<dbReference type="PANTHER" id="PTHR21445">
    <property type="entry name" value="ENDONUCLEASE IV ENDODEOXYRIBONUCLEASE IV"/>
    <property type="match status" value="1"/>
</dbReference>
<dbReference type="Pfam" id="PF01261">
    <property type="entry name" value="AP_endonuc_2"/>
    <property type="match status" value="1"/>
</dbReference>
<dbReference type="SMART" id="SM00518">
    <property type="entry name" value="AP2Ec"/>
    <property type="match status" value="1"/>
</dbReference>
<dbReference type="SUPFAM" id="SSF51658">
    <property type="entry name" value="Xylose isomerase-like"/>
    <property type="match status" value="1"/>
</dbReference>
<dbReference type="PROSITE" id="PS00730">
    <property type="entry name" value="AP_NUCLEASE_F2_2"/>
    <property type="match status" value="1"/>
</dbReference>
<dbReference type="PROSITE" id="PS51432">
    <property type="entry name" value="AP_NUCLEASE_F2_4"/>
    <property type="match status" value="1"/>
</dbReference>
<evidence type="ECO:0000255" key="1">
    <source>
        <dbReference type="HAMAP-Rule" id="MF_00152"/>
    </source>
</evidence>
<accession>B2V158</accession>